<proteinExistence type="inferred from homology"/>
<gene>
    <name evidence="1" type="primary">hemC</name>
    <name type="ordered locus">BOV_1815</name>
</gene>
<comment type="function">
    <text evidence="1">Tetrapolymerization of the monopyrrole PBG into the hydroxymethylbilane pre-uroporphyrinogen in several discrete steps.</text>
</comment>
<comment type="catalytic activity">
    <reaction evidence="1">
        <text>4 porphobilinogen + H2O = hydroxymethylbilane + 4 NH4(+)</text>
        <dbReference type="Rhea" id="RHEA:13185"/>
        <dbReference type="ChEBI" id="CHEBI:15377"/>
        <dbReference type="ChEBI" id="CHEBI:28938"/>
        <dbReference type="ChEBI" id="CHEBI:57845"/>
        <dbReference type="ChEBI" id="CHEBI:58126"/>
        <dbReference type="EC" id="2.5.1.61"/>
    </reaction>
</comment>
<comment type="cofactor">
    <cofactor evidence="1">
        <name>dipyrromethane</name>
        <dbReference type="ChEBI" id="CHEBI:60342"/>
    </cofactor>
    <text evidence="1">Binds 1 dipyrromethane group covalently.</text>
</comment>
<comment type="pathway">
    <text evidence="1">Porphyrin-containing compound metabolism; protoporphyrin-IX biosynthesis; coproporphyrinogen-III from 5-aminolevulinate: step 2/4.</text>
</comment>
<comment type="subunit">
    <text evidence="1">Monomer.</text>
</comment>
<comment type="miscellaneous">
    <text evidence="1">The porphobilinogen subunits are added to the dipyrromethane group.</text>
</comment>
<comment type="similarity">
    <text evidence="1">Belongs to the HMBS family.</text>
</comment>
<feature type="chain" id="PRO_1000047736" description="Porphobilinogen deaminase">
    <location>
        <begin position="1"/>
        <end position="304"/>
    </location>
</feature>
<feature type="modified residue" description="S-(dipyrrolylmethanemethyl)cysteine" evidence="1">
    <location>
        <position position="239"/>
    </location>
</feature>
<name>HEM3_BRUO2</name>
<organism>
    <name type="scientific">Brucella ovis (strain ATCC 25840 / 63/290 / NCTC 10512)</name>
    <dbReference type="NCBI Taxonomy" id="444178"/>
    <lineage>
        <taxon>Bacteria</taxon>
        <taxon>Pseudomonadati</taxon>
        <taxon>Pseudomonadota</taxon>
        <taxon>Alphaproteobacteria</taxon>
        <taxon>Hyphomicrobiales</taxon>
        <taxon>Brucellaceae</taxon>
        <taxon>Brucella/Ochrobactrum group</taxon>
        <taxon>Brucella</taxon>
    </lineage>
</organism>
<evidence type="ECO:0000255" key="1">
    <source>
        <dbReference type="HAMAP-Rule" id="MF_00260"/>
    </source>
</evidence>
<accession>A5VSL5</accession>
<dbReference type="EC" id="2.5.1.61" evidence="1"/>
<dbReference type="EMBL" id="CP000708">
    <property type="protein sequence ID" value="ABQ60842.1"/>
    <property type="molecule type" value="Genomic_DNA"/>
</dbReference>
<dbReference type="SMR" id="A5VSL5"/>
<dbReference type="KEGG" id="bov:BOV_1815"/>
<dbReference type="HOGENOM" id="CLU_019704_1_2_5"/>
<dbReference type="UniPathway" id="UPA00251">
    <property type="reaction ID" value="UER00319"/>
</dbReference>
<dbReference type="Proteomes" id="UP000006383">
    <property type="component" value="Chromosome I"/>
</dbReference>
<dbReference type="GO" id="GO:0005737">
    <property type="term" value="C:cytoplasm"/>
    <property type="evidence" value="ECO:0007669"/>
    <property type="project" value="TreeGrafter"/>
</dbReference>
<dbReference type="GO" id="GO:0004418">
    <property type="term" value="F:hydroxymethylbilane synthase activity"/>
    <property type="evidence" value="ECO:0007669"/>
    <property type="project" value="UniProtKB-UniRule"/>
</dbReference>
<dbReference type="GO" id="GO:0006782">
    <property type="term" value="P:protoporphyrinogen IX biosynthetic process"/>
    <property type="evidence" value="ECO:0007669"/>
    <property type="project" value="UniProtKB-UniRule"/>
</dbReference>
<dbReference type="FunFam" id="3.40.190.10:FF:000004">
    <property type="entry name" value="Porphobilinogen deaminase"/>
    <property type="match status" value="1"/>
</dbReference>
<dbReference type="FunFam" id="3.40.190.10:FF:000005">
    <property type="entry name" value="Porphobilinogen deaminase"/>
    <property type="match status" value="1"/>
</dbReference>
<dbReference type="Gene3D" id="3.40.190.10">
    <property type="entry name" value="Periplasmic binding protein-like II"/>
    <property type="match status" value="2"/>
</dbReference>
<dbReference type="Gene3D" id="3.30.160.40">
    <property type="entry name" value="Porphobilinogen deaminase, C-terminal domain"/>
    <property type="match status" value="1"/>
</dbReference>
<dbReference type="HAMAP" id="MF_00260">
    <property type="entry name" value="Porphobil_deam"/>
    <property type="match status" value="1"/>
</dbReference>
<dbReference type="InterPro" id="IPR000860">
    <property type="entry name" value="HemC"/>
</dbReference>
<dbReference type="InterPro" id="IPR022419">
    <property type="entry name" value="Porphobilin_deaminase_cofac_BS"/>
</dbReference>
<dbReference type="InterPro" id="IPR022417">
    <property type="entry name" value="Porphobilin_deaminase_N"/>
</dbReference>
<dbReference type="InterPro" id="IPR022418">
    <property type="entry name" value="Porphobilinogen_deaminase_C"/>
</dbReference>
<dbReference type="InterPro" id="IPR036803">
    <property type="entry name" value="Porphobilinogen_deaminase_C_sf"/>
</dbReference>
<dbReference type="NCBIfam" id="TIGR00212">
    <property type="entry name" value="hemC"/>
    <property type="match status" value="1"/>
</dbReference>
<dbReference type="PANTHER" id="PTHR11557">
    <property type="entry name" value="PORPHOBILINOGEN DEAMINASE"/>
    <property type="match status" value="1"/>
</dbReference>
<dbReference type="PANTHER" id="PTHR11557:SF0">
    <property type="entry name" value="PORPHOBILINOGEN DEAMINASE"/>
    <property type="match status" value="1"/>
</dbReference>
<dbReference type="Pfam" id="PF01379">
    <property type="entry name" value="Porphobil_deam"/>
    <property type="match status" value="1"/>
</dbReference>
<dbReference type="Pfam" id="PF03900">
    <property type="entry name" value="Porphobil_deamC"/>
    <property type="match status" value="1"/>
</dbReference>
<dbReference type="PIRSF" id="PIRSF001438">
    <property type="entry name" value="4pyrrol_synth_OHMeBilane_synth"/>
    <property type="match status" value="1"/>
</dbReference>
<dbReference type="PRINTS" id="PR00151">
    <property type="entry name" value="PORPHBDMNASE"/>
</dbReference>
<dbReference type="SUPFAM" id="SSF53850">
    <property type="entry name" value="Periplasmic binding protein-like II"/>
    <property type="match status" value="1"/>
</dbReference>
<dbReference type="SUPFAM" id="SSF54782">
    <property type="entry name" value="Porphobilinogen deaminase (hydroxymethylbilane synthase), C-terminal domain"/>
    <property type="match status" value="1"/>
</dbReference>
<dbReference type="PROSITE" id="PS00533">
    <property type="entry name" value="PORPHOBILINOGEN_DEAM"/>
    <property type="match status" value="1"/>
</dbReference>
<sequence>MKIGTRGSKLALAQAYLTRRLLQEAHGLPEDAIEILPMSTAGDRIQDRPLSEVGGKGLFTEEIEQALKDGRIDIAVHSTKDMPTVLPEGLHLSVFLEREDPRDAFIGRSARRFMDLPQGATVGSSSLRRQALIRRLRPDIEVVMYRGNVDTRLRKLDAGEVDGTFLACAGLRRLGLADVITDLLDPSVFPPAPGQGAIGIESRIGDERIDVLLAPLAHRETQIALACERAFLGALDGSCRTPIAGLATVEGDRLSFRGMILTPDGRQAHEVTAEGVVSDAAALGTDAANRVRAMAGPHFFDGWQ</sequence>
<keyword id="KW-0627">Porphyrin biosynthesis</keyword>
<keyword id="KW-0808">Transferase</keyword>
<protein>
    <recommendedName>
        <fullName evidence="1">Porphobilinogen deaminase</fullName>
        <shortName evidence="1">PBG</shortName>
        <ecNumber evidence="1">2.5.1.61</ecNumber>
    </recommendedName>
    <alternativeName>
        <fullName evidence="1">Hydroxymethylbilane synthase</fullName>
        <shortName evidence="1">HMBS</shortName>
    </alternativeName>
    <alternativeName>
        <fullName evidence="1">Pre-uroporphyrinogen synthase</fullName>
    </alternativeName>
</protein>
<reference key="1">
    <citation type="journal article" date="2009" name="PLoS ONE">
        <title>Genome degradation in Brucella ovis corresponds with narrowing of its host range and tissue tropism.</title>
        <authorList>
            <person name="Tsolis R.M."/>
            <person name="Seshadri R."/>
            <person name="Santos R.L."/>
            <person name="Sangari F.J."/>
            <person name="Lobo J.M."/>
            <person name="de Jong M.F."/>
            <person name="Ren Q."/>
            <person name="Myers G."/>
            <person name="Brinkac L.M."/>
            <person name="Nelson W.C."/>
            <person name="Deboy R.T."/>
            <person name="Angiuoli S."/>
            <person name="Khouri H."/>
            <person name="Dimitrov G."/>
            <person name="Robinson J.R."/>
            <person name="Mulligan S."/>
            <person name="Walker R.L."/>
            <person name="Elzer P.E."/>
            <person name="Hassan K.A."/>
            <person name="Paulsen I.T."/>
        </authorList>
    </citation>
    <scope>NUCLEOTIDE SEQUENCE [LARGE SCALE GENOMIC DNA]</scope>
    <source>
        <strain>ATCC 25840 / 63/290 / NCTC 10512</strain>
    </source>
</reference>